<proteinExistence type="inferred from homology"/>
<accession>B7NS90</accession>
<organism>
    <name type="scientific">Escherichia coli O7:K1 (strain IAI39 / ExPEC)</name>
    <dbReference type="NCBI Taxonomy" id="585057"/>
    <lineage>
        <taxon>Bacteria</taxon>
        <taxon>Pseudomonadati</taxon>
        <taxon>Pseudomonadota</taxon>
        <taxon>Gammaproteobacteria</taxon>
        <taxon>Enterobacterales</taxon>
        <taxon>Enterobacteriaceae</taxon>
        <taxon>Escherichia</taxon>
    </lineage>
</organism>
<name>HTPX_ECO7I</name>
<protein>
    <recommendedName>
        <fullName evidence="1">Protease HtpX</fullName>
        <ecNumber evidence="1">3.4.24.-</ecNumber>
    </recommendedName>
    <alternativeName>
        <fullName evidence="1">Heat shock protein HtpX</fullName>
    </alternativeName>
</protein>
<sequence>MMRIALFLLTNLAVMVVFGLVLSLTGIQSSSVQGLMIMALLFGFGGSFVSLLMSKWMALRSVGGEVIEQPRNERERWLVNTVATQARQAGIAMPQVAIYHAPDINAFATGARRDASLVAVSTGLLQNMSPDEAEAVIAHEISHIANGDMVTMTLIQGVVNTFVIFISRILAQLAAGFMGGNRDEGEESNGNPLIYFAVATVLELVFGILASIITMWFSRHREFHADAGSAKLVGREKMIAALQRLKTSYEPQEATSMMAFCINGKSKSLSELFMTHPPLDKRIEALRTGEYLK</sequence>
<keyword id="KW-0997">Cell inner membrane</keyword>
<keyword id="KW-1003">Cell membrane</keyword>
<keyword id="KW-0378">Hydrolase</keyword>
<keyword id="KW-0472">Membrane</keyword>
<keyword id="KW-0479">Metal-binding</keyword>
<keyword id="KW-0482">Metalloprotease</keyword>
<keyword id="KW-0645">Protease</keyword>
<keyword id="KW-0812">Transmembrane</keyword>
<keyword id="KW-1133">Transmembrane helix</keyword>
<keyword id="KW-0862">Zinc</keyword>
<dbReference type="EC" id="3.4.24.-" evidence="1"/>
<dbReference type="EMBL" id="CU928164">
    <property type="protein sequence ID" value="CAR17355.1"/>
    <property type="molecule type" value="Genomic_DNA"/>
</dbReference>
<dbReference type="RefSeq" id="WP_000984517.1">
    <property type="nucleotide sequence ID" value="NC_011750.1"/>
</dbReference>
<dbReference type="RefSeq" id="YP_002407229.1">
    <property type="nucleotide sequence ID" value="NC_011750.1"/>
</dbReference>
<dbReference type="SMR" id="B7NS90"/>
<dbReference type="STRING" id="585057.ECIAI39_1221"/>
<dbReference type="MEROPS" id="M48.002"/>
<dbReference type="GeneID" id="93776079"/>
<dbReference type="KEGG" id="ect:ECIAI39_1221"/>
<dbReference type="PATRIC" id="fig|585057.6.peg.1280"/>
<dbReference type="HOGENOM" id="CLU_042266_1_0_6"/>
<dbReference type="Proteomes" id="UP000000749">
    <property type="component" value="Chromosome"/>
</dbReference>
<dbReference type="GO" id="GO:0005886">
    <property type="term" value="C:plasma membrane"/>
    <property type="evidence" value="ECO:0007669"/>
    <property type="project" value="UniProtKB-SubCell"/>
</dbReference>
<dbReference type="GO" id="GO:0004222">
    <property type="term" value="F:metalloendopeptidase activity"/>
    <property type="evidence" value="ECO:0007669"/>
    <property type="project" value="UniProtKB-UniRule"/>
</dbReference>
<dbReference type="GO" id="GO:0008270">
    <property type="term" value="F:zinc ion binding"/>
    <property type="evidence" value="ECO:0007669"/>
    <property type="project" value="UniProtKB-UniRule"/>
</dbReference>
<dbReference type="GO" id="GO:0006508">
    <property type="term" value="P:proteolysis"/>
    <property type="evidence" value="ECO:0007669"/>
    <property type="project" value="UniProtKB-KW"/>
</dbReference>
<dbReference type="CDD" id="cd07335">
    <property type="entry name" value="M48B_HtpX_like"/>
    <property type="match status" value="1"/>
</dbReference>
<dbReference type="FunFam" id="3.30.2010.10:FF:000001">
    <property type="entry name" value="Protease HtpX"/>
    <property type="match status" value="1"/>
</dbReference>
<dbReference type="Gene3D" id="3.30.2010.10">
    <property type="entry name" value="Metalloproteases ('zincins'), catalytic domain"/>
    <property type="match status" value="1"/>
</dbReference>
<dbReference type="HAMAP" id="MF_00188">
    <property type="entry name" value="Pept_M48_protease_HtpX"/>
    <property type="match status" value="1"/>
</dbReference>
<dbReference type="InterPro" id="IPR050083">
    <property type="entry name" value="HtpX_protease"/>
</dbReference>
<dbReference type="InterPro" id="IPR022919">
    <property type="entry name" value="Pept_M48_protease_HtpX"/>
</dbReference>
<dbReference type="InterPro" id="IPR001915">
    <property type="entry name" value="Peptidase_M48"/>
</dbReference>
<dbReference type="NCBIfam" id="NF003965">
    <property type="entry name" value="PRK05457.1"/>
    <property type="match status" value="1"/>
</dbReference>
<dbReference type="PANTHER" id="PTHR43221">
    <property type="entry name" value="PROTEASE HTPX"/>
    <property type="match status" value="1"/>
</dbReference>
<dbReference type="PANTHER" id="PTHR43221:SF1">
    <property type="entry name" value="PROTEASE HTPX"/>
    <property type="match status" value="1"/>
</dbReference>
<dbReference type="Pfam" id="PF01435">
    <property type="entry name" value="Peptidase_M48"/>
    <property type="match status" value="1"/>
</dbReference>
<reference key="1">
    <citation type="journal article" date="2009" name="PLoS Genet.">
        <title>Organised genome dynamics in the Escherichia coli species results in highly diverse adaptive paths.</title>
        <authorList>
            <person name="Touchon M."/>
            <person name="Hoede C."/>
            <person name="Tenaillon O."/>
            <person name="Barbe V."/>
            <person name="Baeriswyl S."/>
            <person name="Bidet P."/>
            <person name="Bingen E."/>
            <person name="Bonacorsi S."/>
            <person name="Bouchier C."/>
            <person name="Bouvet O."/>
            <person name="Calteau A."/>
            <person name="Chiapello H."/>
            <person name="Clermont O."/>
            <person name="Cruveiller S."/>
            <person name="Danchin A."/>
            <person name="Diard M."/>
            <person name="Dossat C."/>
            <person name="Karoui M.E."/>
            <person name="Frapy E."/>
            <person name="Garry L."/>
            <person name="Ghigo J.M."/>
            <person name="Gilles A.M."/>
            <person name="Johnson J."/>
            <person name="Le Bouguenec C."/>
            <person name="Lescat M."/>
            <person name="Mangenot S."/>
            <person name="Martinez-Jehanne V."/>
            <person name="Matic I."/>
            <person name="Nassif X."/>
            <person name="Oztas S."/>
            <person name="Petit M.A."/>
            <person name="Pichon C."/>
            <person name="Rouy Z."/>
            <person name="Ruf C.S."/>
            <person name="Schneider D."/>
            <person name="Tourret J."/>
            <person name="Vacherie B."/>
            <person name="Vallenet D."/>
            <person name="Medigue C."/>
            <person name="Rocha E.P.C."/>
            <person name="Denamur E."/>
        </authorList>
    </citation>
    <scope>NUCLEOTIDE SEQUENCE [LARGE SCALE GENOMIC DNA]</scope>
    <source>
        <strain>IAI39 / ExPEC</strain>
    </source>
</reference>
<gene>
    <name evidence="1" type="primary">htpX</name>
    <name type="ordered locus">ECIAI39_1221</name>
</gene>
<feature type="chain" id="PRO_1000192741" description="Protease HtpX">
    <location>
        <begin position="1"/>
        <end position="293"/>
    </location>
</feature>
<feature type="transmembrane region" description="Helical" evidence="1">
    <location>
        <begin position="4"/>
        <end position="24"/>
    </location>
</feature>
<feature type="transmembrane region" description="Helical" evidence="1">
    <location>
        <begin position="34"/>
        <end position="54"/>
    </location>
</feature>
<feature type="transmembrane region" description="Helical" evidence="1">
    <location>
        <begin position="158"/>
        <end position="178"/>
    </location>
</feature>
<feature type="transmembrane region" description="Helical" evidence="1">
    <location>
        <begin position="193"/>
        <end position="213"/>
    </location>
</feature>
<feature type="active site" evidence="1">
    <location>
        <position position="140"/>
    </location>
</feature>
<feature type="binding site" evidence="1">
    <location>
        <position position="139"/>
    </location>
    <ligand>
        <name>Zn(2+)</name>
        <dbReference type="ChEBI" id="CHEBI:29105"/>
        <note>catalytic</note>
    </ligand>
</feature>
<feature type="binding site" evidence="1">
    <location>
        <position position="143"/>
    </location>
    <ligand>
        <name>Zn(2+)</name>
        <dbReference type="ChEBI" id="CHEBI:29105"/>
        <note>catalytic</note>
    </ligand>
</feature>
<feature type="binding site" evidence="1">
    <location>
        <position position="222"/>
    </location>
    <ligand>
        <name>Zn(2+)</name>
        <dbReference type="ChEBI" id="CHEBI:29105"/>
        <note>catalytic</note>
    </ligand>
</feature>
<comment type="cofactor">
    <cofactor evidence="1">
        <name>Zn(2+)</name>
        <dbReference type="ChEBI" id="CHEBI:29105"/>
    </cofactor>
    <text evidence="1">Binds 1 zinc ion per subunit.</text>
</comment>
<comment type="subcellular location">
    <subcellularLocation>
        <location evidence="1">Cell inner membrane</location>
        <topology evidence="1">Multi-pass membrane protein</topology>
    </subcellularLocation>
</comment>
<comment type="similarity">
    <text evidence="1">Belongs to the peptidase M48B family.</text>
</comment>
<evidence type="ECO:0000255" key="1">
    <source>
        <dbReference type="HAMAP-Rule" id="MF_00188"/>
    </source>
</evidence>